<keyword id="KW-0963">Cytoplasm</keyword>
<keyword id="KW-0346">Stress response</keyword>
<organism>
    <name type="scientific">Escherichia coli (strain UTI89 / UPEC)</name>
    <dbReference type="NCBI Taxonomy" id="364106"/>
    <lineage>
        <taxon>Bacteria</taxon>
        <taxon>Pseudomonadati</taxon>
        <taxon>Pseudomonadota</taxon>
        <taxon>Gammaproteobacteria</taxon>
        <taxon>Enterobacterales</taxon>
        <taxon>Enterobacteriaceae</taxon>
        <taxon>Escherichia</taxon>
    </lineage>
</organism>
<dbReference type="EMBL" id="CP000243">
    <property type="protein sequence ID" value="ABE10424.1"/>
    <property type="molecule type" value="Genomic_DNA"/>
</dbReference>
<dbReference type="RefSeq" id="WP_001555777.1">
    <property type="nucleotide sequence ID" value="NZ_CP064825.1"/>
</dbReference>
<dbReference type="SMR" id="Q1R2J0"/>
<dbReference type="KEGG" id="eci:UTI89_C5021"/>
<dbReference type="HOGENOM" id="CLU_1977621_0_0_6"/>
<dbReference type="Proteomes" id="UP000001952">
    <property type="component" value="Chromosome"/>
</dbReference>
<dbReference type="GO" id="GO:0005737">
    <property type="term" value="C:cytoplasm"/>
    <property type="evidence" value="ECO:0007669"/>
    <property type="project" value="UniProtKB-SubCell"/>
</dbReference>
<dbReference type="GO" id="GO:0043856">
    <property type="term" value="F:anti-sigma factor antagonist activity"/>
    <property type="evidence" value="ECO:0007669"/>
    <property type="project" value="InterPro"/>
</dbReference>
<dbReference type="GO" id="GO:0034599">
    <property type="term" value="P:cellular response to oxidative stress"/>
    <property type="evidence" value="ECO:0007669"/>
    <property type="project" value="UniProtKB-UniRule"/>
</dbReference>
<dbReference type="GO" id="GO:0006974">
    <property type="term" value="P:DNA damage response"/>
    <property type="evidence" value="ECO:0007669"/>
    <property type="project" value="InterPro"/>
</dbReference>
<dbReference type="HAMAP" id="MF_02010">
    <property type="entry name" value="IraD"/>
    <property type="match status" value="1"/>
</dbReference>
<dbReference type="InterPro" id="IPR023776">
    <property type="entry name" value="Anti-adapt_IraD"/>
</dbReference>
<dbReference type="InterPro" id="IPR007048">
    <property type="entry name" value="IraD/Gp25-like"/>
</dbReference>
<dbReference type="NCBIfam" id="NF010726">
    <property type="entry name" value="PRK14128.1-1"/>
    <property type="match status" value="1"/>
</dbReference>
<dbReference type="NCBIfam" id="NF010728">
    <property type="entry name" value="PRK14128.1-3"/>
    <property type="match status" value="1"/>
</dbReference>
<dbReference type="Pfam" id="PF04965">
    <property type="entry name" value="GPW_gp25"/>
    <property type="match status" value="1"/>
</dbReference>
<dbReference type="SUPFAM" id="SSF160719">
    <property type="entry name" value="gpW/gp25-like"/>
    <property type="match status" value="1"/>
</dbReference>
<reference key="1">
    <citation type="journal article" date="2006" name="Proc. Natl. Acad. Sci. U.S.A.">
        <title>Identification of genes subject to positive selection in uropathogenic strains of Escherichia coli: a comparative genomics approach.</title>
        <authorList>
            <person name="Chen S.L."/>
            <person name="Hung C.-S."/>
            <person name="Xu J."/>
            <person name="Reigstad C.S."/>
            <person name="Magrini V."/>
            <person name="Sabo A."/>
            <person name="Blasiar D."/>
            <person name="Bieri T."/>
            <person name="Meyer R.R."/>
            <person name="Ozersky P."/>
            <person name="Armstrong J.R."/>
            <person name="Fulton R.S."/>
            <person name="Latreille J.P."/>
            <person name="Spieth J."/>
            <person name="Hooton T.M."/>
            <person name="Mardis E.R."/>
            <person name="Hultgren S.J."/>
            <person name="Gordon J.I."/>
        </authorList>
    </citation>
    <scope>NUCLEOTIDE SEQUENCE [LARGE SCALE GENOMIC DNA]</scope>
    <source>
        <strain>UTI89 / UPEC</strain>
    </source>
</reference>
<evidence type="ECO:0000255" key="1">
    <source>
        <dbReference type="HAMAP-Rule" id="MF_02010"/>
    </source>
</evidence>
<comment type="function">
    <text evidence="1">Inhibits RpoS proteolysis by regulating RssB activity, thereby increasing the stability of the sigma stress factor RpoS during oxidative stress. Its effect on RpoS stability is due to its interaction with RssB, which probably blocks the interaction of RssB with RpoS, and the consequent delivery of the RssB-RpoS complex to the ClpXP protein degradation pathway.</text>
</comment>
<comment type="subunit">
    <text evidence="1">Interacts with RssB.</text>
</comment>
<comment type="subcellular location">
    <subcellularLocation>
        <location evidence="1">Cytoplasm</location>
    </subcellularLocation>
</comment>
<comment type="similarity">
    <text evidence="1">Belongs to the GpW/Gp25 family. IraD subfamily.</text>
</comment>
<gene>
    <name evidence="1" type="primary">iraD</name>
    <name type="ordered locus">UTI89_C5021</name>
</gene>
<sequence length="127" mass="14793">MMRQSVQTVLPESTGNNTLSLRDSVCRDLFQLFSSPHSPLPILLVSGMPEWQGHNQSDKLLQSWYCRQLRSALLFHEPRIAALQVNLKEAYCHELAISLEMMLYHDDEPLTFDLVWQKGNWHRTMPQ</sequence>
<feature type="chain" id="PRO_0000337890" description="Anti-adapter protein IraD">
    <location>
        <begin position="1"/>
        <end position="127"/>
    </location>
</feature>
<proteinExistence type="inferred from homology"/>
<name>IRAD_ECOUT</name>
<protein>
    <recommendedName>
        <fullName evidence="1">Anti-adapter protein IraD</fullName>
    </recommendedName>
</protein>
<accession>Q1R2J0</accession>